<protein>
    <recommendedName>
        <fullName>SUN domain-containing protein 5</fullName>
    </recommendedName>
    <alternativeName>
        <fullName>Sad1 and UNC84 domain-containing protein 5</fullName>
    </alternativeName>
    <alternativeName>
        <fullName>Sperm-associated antigen 4-like protein</fullName>
    </alternativeName>
    <alternativeName>
        <fullName>Testis and spermatogenesis-related gene 4 protein</fullName>
    </alternativeName>
</protein>
<feature type="chain" id="PRO_0000218919" description="SUN domain-containing protein 5">
    <location>
        <begin position="1"/>
        <end position="379"/>
    </location>
</feature>
<feature type="topological domain" description="Nuclear" evidence="2">
    <location>
        <begin position="1"/>
        <end position="105"/>
    </location>
</feature>
<feature type="transmembrane region" description="Helical" evidence="2">
    <location>
        <begin position="106"/>
        <end position="122"/>
    </location>
</feature>
<feature type="topological domain" description="Perinuclear space" evidence="2">
    <location>
        <begin position="123"/>
        <end position="379"/>
    </location>
</feature>
<feature type="domain" description="SUN" evidence="3">
    <location>
        <begin position="205"/>
        <end position="364"/>
    </location>
</feature>
<feature type="region of interest" description="Disordered" evidence="4">
    <location>
        <begin position="1"/>
        <end position="45"/>
    </location>
</feature>
<feature type="coiled-coil region" evidence="2">
    <location>
        <begin position="141"/>
        <end position="182"/>
    </location>
</feature>
<feature type="compositionally biased region" description="Polar residues" evidence="4">
    <location>
        <begin position="31"/>
        <end position="45"/>
    </location>
</feature>
<feature type="sequence variant" id="VAR_015147" description="In dbSNP:rs3746387.">
    <original>E</original>
    <variation>K</variation>
    <location>
        <position position="16"/>
    </location>
</feature>
<feature type="sequence variant" id="VAR_026677" description="In dbSNP:rs1133358.">
    <original>E</original>
    <variation>D</variation>
    <location>
        <position position="39"/>
    </location>
</feature>
<feature type="sequence variant" id="VAR_077983" description="In SPGF16; loss of protein expression; impaired localization to nuclear inner membrane." evidence="7 9">
    <original>G</original>
    <variation>R</variation>
    <location>
        <position position="114"/>
    </location>
</feature>
<feature type="sequence variant" id="VAR_052285" description="In dbSNP:rs35216976.">
    <original>I</original>
    <variation>V</variation>
    <location>
        <position position="120"/>
    </location>
</feature>
<feature type="sequence variant" id="VAR_080157" description="In SPGF16; in mouse model abolishes interaction with DNAJB13." evidence="10">
    <location>
        <begin position="159"/>
        <end position="379"/>
    </location>
</feature>
<feature type="sequence variant" id="VAR_077984" description="In SPGF16; uncertain significance; in mouse model increases interaction with DNAJB13; impaired localization to nuclear inner membrane; dbSNP:rs886041023." evidence="7 10">
    <original>M</original>
    <variation>K</variation>
    <location>
        <position position="162"/>
    </location>
</feature>
<feature type="sequence variant" id="VAR_026678" description="In dbSNP:rs17123951.">
    <original>A</original>
    <variation>T</variation>
    <location>
        <position position="174"/>
    </location>
</feature>
<feature type="sequence variant" id="VAR_077985" description="In SPGF16; uncertain significance; in mouse model decreases protein solubility as well as impairs nuclear inner membrane location and decreases interaction with DNAJB13; dbSNP:rs886041024." evidence="7 10">
    <original>V</original>
    <variation>M</variation>
    <location>
        <position position="261"/>
    </location>
</feature>
<feature type="sequence variant" id="VAR_077986" description="In SPGF16; significant reduction in protein expression; impaired localization to nuclear inner membrane; in mouse model decreases interaction with DNAJB13; dbSNP:rs756459525." evidence="7 9 10">
    <original>T</original>
    <variation>M</variation>
    <location>
        <position position="275"/>
    </location>
</feature>
<feature type="sequence variant" id="VAR_080158" description="In SPGF16; significant reduction in protein expression; impaired localization to nuclear inner membrane; in mouse model decreases interaction with DNAJB13." evidence="7 10">
    <location>
        <begin position="284"/>
        <end position="379"/>
    </location>
</feature>
<feature type="sequence variant" id="VAR_077987" description="In SPGF16; loss of protein expression; in mouse model impairs nuclear inner membrane location and decreases interaction with DNAJB13; dbSNP:rs758335571." evidence="7 10">
    <original>N</original>
    <variation>I</variation>
    <location>
        <position position="348"/>
    </location>
</feature>
<feature type="sequence variant" id="VAR_077988" description="In SPGF16; uncertain significance; in mouse model impairs nuclear inner membrane location and decreases interaction with DNAJB13; dbSNP:rs754130052." evidence="7 10">
    <original>R</original>
    <variation>C</variation>
    <location>
        <position position="356"/>
    </location>
</feature>
<comment type="function">
    <text evidence="12 13">Plays an essential role in anchoring sperm head to the tail. Is responsible for the attachment of the coupling apparatus to the sperm nuclear envelope.</text>
</comment>
<comment type="subunit">
    <text evidence="1">Probable homotrimer. Interacts with DNAJB13.</text>
</comment>
<comment type="interaction">
    <interactant intactId="EBI-13068796">
        <id>Q8TC36</id>
    </interactant>
    <interactant intactId="EBI-10819434">
        <id>Q9NPE6</id>
        <label>SPAG4</label>
    </interactant>
    <organismsDiffer>false</organismsDiffer>
    <experiments>3</experiments>
</comment>
<comment type="subcellular location">
    <subcellularLocation>
        <location evidence="11">Nucleus inner membrane</location>
        <topology evidence="1">Single-pass membrane protein</topology>
    </subcellularLocation>
    <subcellularLocation>
        <location evidence="1">Golgi apparatus</location>
    </subcellularLocation>
    <text evidence="11">During spermiogenesis, traffics through the Golgi apparatus before reaching the round spermatid inner membrane of the nuclear envelope and later migrates to the coupling apparatus of the sperm during sperm head elongation and differentiation. In mature spermatozoa, is localized to the coupling apparatus of the sperm head and tail in the implementation fossa.</text>
</comment>
<comment type="tissue specificity">
    <text evidence="5 6 7">Sperm (at protein level) (PubMed:27640305). Widely expressed (PubMed:12621555). Conflictingly shown to be specifically expressed in testis (PubMed:21711156).</text>
</comment>
<comment type="PTM">
    <text evidence="1">Highly glycosylated in the Golgi apparatus during spermiogenesis.</text>
</comment>
<comment type="disease" evidence="7 8 9 10">
    <disease id="DI-04878">
        <name>Spermatogenic failure 16</name>
        <acronym>SPGF16</acronym>
        <description>An infertility disorder caused by spermatogenesis defects and characterized by abnormally shaped spermatozoa in the semen of affected individuals. Most spermatozoa are made up of headless tails, while a small proportion has an abnormal head-tail junction. A few spermatozoa are made up of tailless heads.</description>
        <dbReference type="MIM" id="617187"/>
    </disease>
    <text>The disease is caused by variants affecting the gene represented in this entry.</text>
</comment>
<organism>
    <name type="scientific">Homo sapiens</name>
    <name type="common">Human</name>
    <dbReference type="NCBI Taxonomy" id="9606"/>
    <lineage>
        <taxon>Eukaryota</taxon>
        <taxon>Metazoa</taxon>
        <taxon>Chordata</taxon>
        <taxon>Craniata</taxon>
        <taxon>Vertebrata</taxon>
        <taxon>Euteleostomi</taxon>
        <taxon>Mammalia</taxon>
        <taxon>Eutheria</taxon>
        <taxon>Euarchontoglires</taxon>
        <taxon>Primates</taxon>
        <taxon>Haplorrhini</taxon>
        <taxon>Catarrhini</taxon>
        <taxon>Hominidae</taxon>
        <taxon>Homo</taxon>
    </lineage>
</organism>
<evidence type="ECO:0000250" key="1">
    <source>
        <dbReference type="UniProtKB" id="Q9DA32"/>
    </source>
</evidence>
<evidence type="ECO:0000255" key="2"/>
<evidence type="ECO:0000255" key="3">
    <source>
        <dbReference type="PROSITE-ProRule" id="PRU00802"/>
    </source>
</evidence>
<evidence type="ECO:0000256" key="4">
    <source>
        <dbReference type="SAM" id="MobiDB-lite"/>
    </source>
</evidence>
<evidence type="ECO:0000269" key="5">
    <source>
    </source>
</evidence>
<evidence type="ECO:0000269" key="6">
    <source>
    </source>
</evidence>
<evidence type="ECO:0000269" key="7">
    <source>
    </source>
</evidence>
<evidence type="ECO:0000269" key="8">
    <source>
    </source>
</evidence>
<evidence type="ECO:0000269" key="9">
    <source>
    </source>
</evidence>
<evidence type="ECO:0000269" key="10">
    <source>
    </source>
</evidence>
<evidence type="ECO:0000305" key="11">
    <source>
    </source>
</evidence>
<evidence type="ECO:0000305" key="12">
    <source>
    </source>
</evidence>
<evidence type="ECO:0000305" key="13">
    <source>
    </source>
</evidence>
<accession>Q8TC36</accession>
<accession>A6NJ82</accession>
<accession>Q5T9R0</accession>
<name>SUN5_HUMAN</name>
<reference key="1">
    <citation type="journal article" date="2003" name="Sheng Wu Hua Xue Yu Sheng Wu Wu Li Xue Bao">
        <title>Cloning of cDNA of TSARG4, a human spermatogenesis related gene.</title>
        <authorList>
            <person name="Xing X.W."/>
            <person name="Li L.Y."/>
            <person name="Fu J.J."/>
            <person name="Zhu W.B."/>
            <person name="Liu G."/>
            <person name="Liu S.F."/>
            <person name="Lu G.X."/>
        </authorList>
    </citation>
    <scope>NUCLEOTIDE SEQUENCE [MRNA]</scope>
    <scope>TISSUE SPECIFICITY</scope>
</reference>
<reference key="2">
    <citation type="journal article" date="2001" name="Nature">
        <title>The DNA sequence and comparative analysis of human chromosome 20.</title>
        <authorList>
            <person name="Deloukas P."/>
            <person name="Matthews L.H."/>
            <person name="Ashurst J.L."/>
            <person name="Burton J."/>
            <person name="Gilbert J.G.R."/>
            <person name="Jones M."/>
            <person name="Stavrides G."/>
            <person name="Almeida J.P."/>
            <person name="Babbage A.K."/>
            <person name="Bagguley C.L."/>
            <person name="Bailey J."/>
            <person name="Barlow K.F."/>
            <person name="Bates K.N."/>
            <person name="Beard L.M."/>
            <person name="Beare D.M."/>
            <person name="Beasley O.P."/>
            <person name="Bird C.P."/>
            <person name="Blakey S.E."/>
            <person name="Bridgeman A.M."/>
            <person name="Brown A.J."/>
            <person name="Buck D."/>
            <person name="Burrill W.D."/>
            <person name="Butler A.P."/>
            <person name="Carder C."/>
            <person name="Carter N.P."/>
            <person name="Chapman J.C."/>
            <person name="Clamp M."/>
            <person name="Clark G."/>
            <person name="Clark L.N."/>
            <person name="Clark S.Y."/>
            <person name="Clee C.M."/>
            <person name="Clegg S."/>
            <person name="Cobley V.E."/>
            <person name="Collier R.E."/>
            <person name="Connor R.E."/>
            <person name="Corby N.R."/>
            <person name="Coulson A."/>
            <person name="Coville G.J."/>
            <person name="Deadman R."/>
            <person name="Dhami P.D."/>
            <person name="Dunn M."/>
            <person name="Ellington A.G."/>
            <person name="Frankland J.A."/>
            <person name="Fraser A."/>
            <person name="French L."/>
            <person name="Garner P."/>
            <person name="Grafham D.V."/>
            <person name="Griffiths C."/>
            <person name="Griffiths M.N.D."/>
            <person name="Gwilliam R."/>
            <person name="Hall R.E."/>
            <person name="Hammond S."/>
            <person name="Harley J.L."/>
            <person name="Heath P.D."/>
            <person name="Ho S."/>
            <person name="Holden J.L."/>
            <person name="Howden P.J."/>
            <person name="Huckle E."/>
            <person name="Hunt A.R."/>
            <person name="Hunt S.E."/>
            <person name="Jekosch K."/>
            <person name="Johnson C.M."/>
            <person name="Johnson D."/>
            <person name="Kay M.P."/>
            <person name="Kimberley A.M."/>
            <person name="King A."/>
            <person name="Knights A."/>
            <person name="Laird G.K."/>
            <person name="Lawlor S."/>
            <person name="Lehvaeslaiho M.H."/>
            <person name="Leversha M.A."/>
            <person name="Lloyd C."/>
            <person name="Lloyd D.M."/>
            <person name="Lovell J.D."/>
            <person name="Marsh V.L."/>
            <person name="Martin S.L."/>
            <person name="McConnachie L.J."/>
            <person name="McLay K."/>
            <person name="McMurray A.A."/>
            <person name="Milne S.A."/>
            <person name="Mistry D."/>
            <person name="Moore M.J.F."/>
            <person name="Mullikin J.C."/>
            <person name="Nickerson T."/>
            <person name="Oliver K."/>
            <person name="Parker A."/>
            <person name="Patel R."/>
            <person name="Pearce T.A.V."/>
            <person name="Peck A.I."/>
            <person name="Phillimore B.J.C.T."/>
            <person name="Prathalingam S.R."/>
            <person name="Plumb R.W."/>
            <person name="Ramsay H."/>
            <person name="Rice C.M."/>
            <person name="Ross M.T."/>
            <person name="Scott C.E."/>
            <person name="Sehra H.K."/>
            <person name="Shownkeen R."/>
            <person name="Sims S."/>
            <person name="Skuce C.D."/>
            <person name="Smith M.L."/>
            <person name="Soderlund C."/>
            <person name="Steward C.A."/>
            <person name="Sulston J.E."/>
            <person name="Swann R.M."/>
            <person name="Sycamore N."/>
            <person name="Taylor R."/>
            <person name="Tee L."/>
            <person name="Thomas D.W."/>
            <person name="Thorpe A."/>
            <person name="Tracey A."/>
            <person name="Tromans A.C."/>
            <person name="Vaudin M."/>
            <person name="Wall M."/>
            <person name="Wallis J.M."/>
            <person name="Whitehead S.L."/>
            <person name="Whittaker P."/>
            <person name="Willey D.L."/>
            <person name="Williams L."/>
            <person name="Williams S.A."/>
            <person name="Wilming L."/>
            <person name="Wray P.W."/>
            <person name="Hubbard T."/>
            <person name="Durbin R.M."/>
            <person name="Bentley D.R."/>
            <person name="Beck S."/>
            <person name="Rogers J."/>
        </authorList>
    </citation>
    <scope>NUCLEOTIDE SEQUENCE [LARGE SCALE GENOMIC DNA]</scope>
</reference>
<reference key="3">
    <citation type="submission" date="2005-09" db="EMBL/GenBank/DDBJ databases">
        <authorList>
            <person name="Mural R.J."/>
            <person name="Istrail S."/>
            <person name="Sutton G.G."/>
            <person name="Florea L."/>
            <person name="Halpern A.L."/>
            <person name="Mobarry C.M."/>
            <person name="Lippert R."/>
            <person name="Walenz B."/>
            <person name="Shatkay H."/>
            <person name="Dew I."/>
            <person name="Miller J.R."/>
            <person name="Flanigan M.J."/>
            <person name="Edwards N.J."/>
            <person name="Bolanos R."/>
            <person name="Fasulo D."/>
            <person name="Halldorsson B.V."/>
            <person name="Hannenhalli S."/>
            <person name="Turner R."/>
            <person name="Yooseph S."/>
            <person name="Lu F."/>
            <person name="Nusskern D.R."/>
            <person name="Shue B.C."/>
            <person name="Zheng X.H."/>
            <person name="Zhong F."/>
            <person name="Delcher A.L."/>
            <person name="Huson D.H."/>
            <person name="Kravitz S.A."/>
            <person name="Mouchard L."/>
            <person name="Reinert K."/>
            <person name="Remington K.A."/>
            <person name="Clark A.G."/>
            <person name="Waterman M.S."/>
            <person name="Eichler E.E."/>
            <person name="Adams M.D."/>
            <person name="Hunkapiller M.W."/>
            <person name="Myers E.W."/>
            <person name="Venter J.C."/>
        </authorList>
    </citation>
    <scope>NUCLEOTIDE SEQUENCE [LARGE SCALE GENOMIC DNA]</scope>
</reference>
<reference key="4">
    <citation type="journal article" date="2004" name="Genome Res.">
        <title>The status, quality, and expansion of the NIH full-length cDNA project: the Mammalian Gene Collection (MGC).</title>
        <authorList>
            <consortium name="The MGC Project Team"/>
        </authorList>
    </citation>
    <scope>NUCLEOTIDE SEQUENCE [LARGE SCALE MRNA]</scope>
    <source>
        <tissue>Testis</tissue>
    </source>
</reference>
<reference key="5">
    <citation type="journal article" date="2011" name="DNA Cell Biol.">
        <title>SPAG4L, a novel nuclear envelope protein involved in the meiotic stage of spermatogenesis.</title>
        <authorList>
            <person name="Jiang X.Z."/>
            <person name="Yang M.G."/>
            <person name="Huang L.H."/>
            <person name="Li C.Q."/>
            <person name="Xing X.W."/>
        </authorList>
    </citation>
    <scope>TISSUE SPECIFICITY</scope>
</reference>
<reference key="6">
    <citation type="journal article" date="2016" name="Am. J. Hum. Genet.">
        <title>Biallelic SUN5 mutations cause autosomal-recessive acephalic spermatozoa syndrome.</title>
        <authorList>
            <person name="Zhu F."/>
            <person name="Wang F."/>
            <person name="Yang X."/>
            <person name="Zhang J."/>
            <person name="Wu H."/>
            <person name="Zhang Z."/>
            <person name="Zhang Z."/>
            <person name="He X."/>
            <person name="Zhou P."/>
            <person name="Wei Z."/>
            <person name="Gecz J."/>
            <person name="Cao Y."/>
        </authorList>
    </citation>
    <scope>VARIANTS SPGF16 ARG-114; LYS-162; MET-261; MET-275; 284-SER--ASP-379 DEL; ILE-348 AND CYS-356</scope>
    <scope>CHARACTERIZATION OF VARIANTS SPGF16 ARG-114; MET-275; 284-SER--ASP-379 DEL AND ILE-348</scope>
    <scope>SUBCELLULAR LOCATION</scope>
    <scope>INVOLVEMENT IN SPGF16</scope>
    <scope>TISSUE SPECIFICITY</scope>
</reference>
<reference key="7">
    <citation type="journal article" date="2016" name="Am. J. Hum. Genet.">
        <title>Biallelic SUN5 Mutations Cause Autosomal-Recessive Acephalic Spermatozoa Syndrome.</title>
        <authorList>
            <person name="Zhu F."/>
            <person name="Wang F."/>
            <person name="Yang X."/>
            <person name="Zhang J."/>
            <person name="Wu H."/>
            <person name="Zhang Z."/>
            <person name="Zhang Z."/>
            <person name="He X."/>
            <person name="Zhou P."/>
            <person name="Wei Z."/>
            <person name="Gecz J."/>
            <person name="Cao Y."/>
        </authorList>
    </citation>
    <scope>ERRATUM OF PUBMED:27640305</scope>
</reference>
<reference key="8">
    <citation type="journal article" date="2017" name="Elife">
        <title>Essential role for SUN5 in anchoring sperm head to the tail.</title>
        <authorList>
            <person name="Shang Y."/>
            <person name="Zhu F."/>
            <person name="Wang L."/>
            <person name="Ouyang Y.C."/>
            <person name="Dong M.Z."/>
            <person name="Liu C."/>
            <person name="Zhao H."/>
            <person name="Cui X."/>
            <person name="Ma D."/>
            <person name="Zhang Z."/>
            <person name="Yang X."/>
            <person name="Guo Y."/>
            <person name="Liu F."/>
            <person name="Yuan L."/>
            <person name="Gao F."/>
            <person name="Guo X."/>
            <person name="Sun Q.Y."/>
            <person name="Cao Y."/>
            <person name="Li W."/>
        </authorList>
    </citation>
    <scope>VARIANTS SPGF16 ARG-114 AND MET-275</scope>
    <scope>FUNCTION</scope>
</reference>
<reference key="9">
    <citation type="journal article" date="2017" name="Hum. Mol. Genet.">
        <title>Homozygous deletion of SUN5 in three men with decapitated spermatozoa.</title>
        <authorList>
            <person name="Elkhatib R.A."/>
            <person name="Paci M."/>
            <person name="Longepied G."/>
            <person name="Saias-Magnan J."/>
            <person name="Courbiere B."/>
            <person name="Guichaoua M.R."/>
            <person name="Levy N."/>
            <person name="Metzler-Guillemain C."/>
            <person name="Mitchell M.J."/>
        </authorList>
    </citation>
    <scope>INVOLVEMENT IN SPGF16</scope>
    <scope>FUNCTION</scope>
</reference>
<reference key="10">
    <citation type="journal article" date="2018" name="J. Biol. Chem.">
        <title>Mechanistic insights into acephalic spermatozoa syndrome-associated mutations in the human SUN5 gene.</title>
        <authorList>
            <person name="Shang Y."/>
            <person name="Yan J."/>
            <person name="Tang W."/>
            <person name="Liu C."/>
            <person name="Xiao S."/>
            <person name="Guo Y."/>
            <person name="Yuan L."/>
            <person name="Chen L."/>
            <person name="Jiang H."/>
            <person name="Guo X."/>
            <person name="Qiao J."/>
            <person name="Li W."/>
        </authorList>
    </citation>
    <scope>VARIANTS SPGF16 159-ARG--ASP-379 DEL AND LYS-162</scope>
    <scope>CHARACTERIZATION OF VARIANTS SPGF16 159-ARG--ASP-379 DEL; LYS-162; MET-261; MET-275; SER-284--ASP-379 DEL; ILE-348 AND CYS-356</scope>
</reference>
<gene>
    <name type="primary">SUN5</name>
    <name type="synonym">SPAG4L</name>
    <name type="synonym">TSARG4</name>
</gene>
<keyword id="KW-0175">Coiled coil</keyword>
<keyword id="KW-0221">Differentiation</keyword>
<keyword id="KW-0225">Disease variant</keyword>
<keyword id="KW-0325">Glycoprotein</keyword>
<keyword id="KW-0333">Golgi apparatus</keyword>
<keyword id="KW-0472">Membrane</keyword>
<keyword id="KW-0539">Nucleus</keyword>
<keyword id="KW-1267">Proteomics identification</keyword>
<keyword id="KW-1185">Reference proteome</keyword>
<keyword id="KW-0744">Spermatogenesis</keyword>
<keyword id="KW-0812">Transmembrane</keyword>
<keyword id="KW-1133">Transmembrane helix</keyword>
<sequence>MPRSSRSPGDPGALLEDVAHNPRPRRIAQRGRNTSRMAEDTSPNMNDNILLPVRNNDQALGLTQCMLGCVSWFTCFACSLRTQAQQVLFNTCRCKLLCQKLMEKTGILLLCAFGFWMFSIHLPSKMKVWQDDSINGPLQSLRLYQEKVRHHSGEIQDLRGSMNQLIAKLQEMEAMSDEQKMAQKIMKMIHGDYIEKPDFALKSIGASIDFEHTSVTYNHEKAHSYWNWIQLWNYAQPPDVILEPNVTPGNCWAFEGDRGQVTIQLAQKVYLSNLTLQHIPKTISLSGSLDTAPKDFVIYGMEGSPKEEVFLGAFQFQPENIIQMFPLQNQPARAFSAVKVKISSNWGNPGFTCLYRVRVHGSVAPPREQPHQNPYPKRD</sequence>
<dbReference type="EMBL" id="AF401350">
    <property type="protein sequence ID" value="AAM90665.1"/>
    <property type="molecule type" value="mRNA"/>
</dbReference>
<dbReference type="EMBL" id="AL139826">
    <property type="status" value="NOT_ANNOTATED_CDS"/>
    <property type="molecule type" value="Genomic_DNA"/>
</dbReference>
<dbReference type="EMBL" id="AL121756">
    <property type="status" value="NOT_ANNOTATED_CDS"/>
    <property type="molecule type" value="Genomic_DNA"/>
</dbReference>
<dbReference type="EMBL" id="CH471077">
    <property type="protein sequence ID" value="EAW76343.1"/>
    <property type="molecule type" value="Genomic_DNA"/>
</dbReference>
<dbReference type="EMBL" id="BC026118">
    <property type="protein sequence ID" value="AAH26118.1"/>
    <property type="molecule type" value="mRNA"/>
</dbReference>
<dbReference type="EMBL" id="BC029528">
    <property type="protein sequence ID" value="AAH29528.1"/>
    <property type="molecule type" value="mRNA"/>
</dbReference>
<dbReference type="CCDS" id="CCDS13209.1"/>
<dbReference type="RefSeq" id="NP_542406.2">
    <property type="nucleotide sequence ID" value="NM_080675.3"/>
</dbReference>
<dbReference type="SMR" id="Q8TC36"/>
<dbReference type="BioGRID" id="126678">
    <property type="interactions" value="8"/>
</dbReference>
<dbReference type="FunCoup" id="Q8TC36">
    <property type="interactions" value="5"/>
</dbReference>
<dbReference type="IntAct" id="Q8TC36">
    <property type="interactions" value="2"/>
</dbReference>
<dbReference type="STRING" id="9606.ENSP00000348496"/>
<dbReference type="iPTMnet" id="Q8TC36"/>
<dbReference type="PhosphoSitePlus" id="Q8TC36"/>
<dbReference type="BioMuta" id="SUN5"/>
<dbReference type="DMDM" id="27805720"/>
<dbReference type="MassIVE" id="Q8TC36"/>
<dbReference type="PaxDb" id="9606-ENSP00000348496"/>
<dbReference type="PeptideAtlas" id="Q8TC36"/>
<dbReference type="ProteomicsDB" id="74086"/>
<dbReference type="Antibodypedia" id="25466">
    <property type="antibodies" value="112 antibodies from 24 providers"/>
</dbReference>
<dbReference type="DNASU" id="140732"/>
<dbReference type="Ensembl" id="ENST00000356173.8">
    <property type="protein sequence ID" value="ENSP00000348496.3"/>
    <property type="gene ID" value="ENSG00000167098.12"/>
</dbReference>
<dbReference type="GeneID" id="140732"/>
<dbReference type="KEGG" id="hsa:140732"/>
<dbReference type="MANE-Select" id="ENST00000356173.8">
    <property type="protein sequence ID" value="ENSP00000348496.3"/>
    <property type="RefSeq nucleotide sequence ID" value="NM_080675.4"/>
    <property type="RefSeq protein sequence ID" value="NP_542406.2"/>
</dbReference>
<dbReference type="UCSC" id="uc002wyi.4">
    <property type="organism name" value="human"/>
</dbReference>
<dbReference type="AGR" id="HGNC:16252"/>
<dbReference type="CTD" id="140732"/>
<dbReference type="DisGeNET" id="140732"/>
<dbReference type="GeneCards" id="SUN5"/>
<dbReference type="HGNC" id="HGNC:16252">
    <property type="gene designation" value="SUN5"/>
</dbReference>
<dbReference type="HPA" id="ENSG00000167098">
    <property type="expression patterns" value="Tissue enriched (testis)"/>
</dbReference>
<dbReference type="MalaCards" id="SUN5"/>
<dbReference type="MIM" id="613942">
    <property type="type" value="gene"/>
</dbReference>
<dbReference type="MIM" id="617187">
    <property type="type" value="phenotype"/>
</dbReference>
<dbReference type="neXtProt" id="NX_Q8TC36"/>
<dbReference type="OpenTargets" id="ENSG00000167098"/>
<dbReference type="Orphanet" id="529970">
    <property type="disease" value="Male infertility due to acephalic spermatozoa"/>
</dbReference>
<dbReference type="PharmGKB" id="PA38095"/>
<dbReference type="VEuPathDB" id="HostDB:ENSG00000167098"/>
<dbReference type="eggNOG" id="KOG2687">
    <property type="taxonomic scope" value="Eukaryota"/>
</dbReference>
<dbReference type="GeneTree" id="ENSGT00940000155225"/>
<dbReference type="InParanoid" id="Q8TC36"/>
<dbReference type="OMA" id="GFWVFSM"/>
<dbReference type="OrthoDB" id="342281at2759"/>
<dbReference type="PAN-GO" id="Q8TC36">
    <property type="GO annotations" value="4 GO annotations based on evolutionary models"/>
</dbReference>
<dbReference type="PhylomeDB" id="Q8TC36"/>
<dbReference type="TreeFam" id="TF323915"/>
<dbReference type="PathwayCommons" id="Q8TC36"/>
<dbReference type="SignaLink" id="Q8TC36"/>
<dbReference type="SIGNOR" id="Q8TC36"/>
<dbReference type="BioGRID-ORCS" id="140732">
    <property type="hits" value="16 hits in 1135 CRISPR screens"/>
</dbReference>
<dbReference type="GeneWiki" id="SPAG4L"/>
<dbReference type="GenomeRNAi" id="140732"/>
<dbReference type="Pharos" id="Q8TC36">
    <property type="development level" value="Tbio"/>
</dbReference>
<dbReference type="PRO" id="PR:Q8TC36"/>
<dbReference type="Proteomes" id="UP000005640">
    <property type="component" value="Chromosome 20"/>
</dbReference>
<dbReference type="RNAct" id="Q8TC36">
    <property type="molecule type" value="protein"/>
</dbReference>
<dbReference type="Bgee" id="ENSG00000167098">
    <property type="expression patterns" value="Expressed in right testis and 32 other cell types or tissues"/>
</dbReference>
<dbReference type="ExpressionAtlas" id="Q8TC36">
    <property type="expression patterns" value="baseline and differential"/>
</dbReference>
<dbReference type="GO" id="GO:0005794">
    <property type="term" value="C:Golgi apparatus"/>
    <property type="evidence" value="ECO:0007669"/>
    <property type="project" value="UniProtKB-SubCell"/>
</dbReference>
<dbReference type="GO" id="GO:0034993">
    <property type="term" value="C:meiotic nuclear membrane microtubule tethering complex"/>
    <property type="evidence" value="ECO:0000318"/>
    <property type="project" value="GO_Central"/>
</dbReference>
<dbReference type="GO" id="GO:0005635">
    <property type="term" value="C:nuclear envelope"/>
    <property type="evidence" value="ECO:0000318"/>
    <property type="project" value="GO_Central"/>
</dbReference>
<dbReference type="GO" id="GO:0005637">
    <property type="term" value="C:nuclear inner membrane"/>
    <property type="evidence" value="ECO:0000314"/>
    <property type="project" value="UniProtKB"/>
</dbReference>
<dbReference type="GO" id="GO:0120212">
    <property type="term" value="C:sperm head-tail coupling apparatus"/>
    <property type="evidence" value="ECO:0000314"/>
    <property type="project" value="UniProtKB"/>
</dbReference>
<dbReference type="GO" id="GO:0043495">
    <property type="term" value="F:protein-membrane adaptor activity"/>
    <property type="evidence" value="ECO:0000318"/>
    <property type="project" value="GO_Central"/>
</dbReference>
<dbReference type="GO" id="GO:0007286">
    <property type="term" value="P:spermatid development"/>
    <property type="evidence" value="ECO:0000250"/>
    <property type="project" value="UniProtKB"/>
</dbReference>
<dbReference type="GO" id="GO:0007283">
    <property type="term" value="P:spermatogenesis"/>
    <property type="evidence" value="ECO:0000270"/>
    <property type="project" value="UniProtKB"/>
</dbReference>
<dbReference type="FunFam" id="2.60.120.260:FF:000032">
    <property type="entry name" value="Sperm associated antigen 4 (Predicted)"/>
    <property type="match status" value="1"/>
</dbReference>
<dbReference type="Gene3D" id="2.60.120.260">
    <property type="entry name" value="Galactose-binding domain-like"/>
    <property type="match status" value="1"/>
</dbReference>
<dbReference type="InterPro" id="IPR045119">
    <property type="entry name" value="SUN1-5"/>
</dbReference>
<dbReference type="InterPro" id="IPR012919">
    <property type="entry name" value="SUN_dom"/>
</dbReference>
<dbReference type="PANTHER" id="PTHR12911">
    <property type="entry name" value="SAD1/UNC-84-LIKE PROTEIN-RELATED"/>
    <property type="match status" value="1"/>
</dbReference>
<dbReference type="PANTHER" id="PTHR12911:SF44">
    <property type="entry name" value="SUN DOMAIN-CONTAINING PROTEIN 5"/>
    <property type="match status" value="1"/>
</dbReference>
<dbReference type="Pfam" id="PF07738">
    <property type="entry name" value="Sad1_UNC"/>
    <property type="match status" value="1"/>
</dbReference>
<dbReference type="PROSITE" id="PS51469">
    <property type="entry name" value="SUN"/>
    <property type="match status" value="1"/>
</dbReference>
<proteinExistence type="evidence at protein level"/>